<protein>
    <recommendedName>
        <fullName evidence="1">Argininosuccinate synthase</fullName>
        <ecNumber evidence="1">6.3.4.5</ecNumber>
    </recommendedName>
    <alternativeName>
        <fullName evidence="1">Citrulline--aspartate ligase</fullName>
    </alternativeName>
</protein>
<evidence type="ECO:0000255" key="1">
    <source>
        <dbReference type="HAMAP-Rule" id="MF_00005"/>
    </source>
</evidence>
<feature type="chain" id="PRO_0000148583" description="Argininosuccinate synthase">
    <location>
        <begin position="1"/>
        <end position="401"/>
    </location>
</feature>
<feature type="binding site" evidence="1">
    <location>
        <begin position="9"/>
        <end position="17"/>
    </location>
    <ligand>
        <name>ATP</name>
        <dbReference type="ChEBI" id="CHEBI:30616"/>
    </ligand>
</feature>
<feature type="binding site" evidence="1">
    <location>
        <position position="88"/>
    </location>
    <ligand>
        <name>L-citrulline</name>
        <dbReference type="ChEBI" id="CHEBI:57743"/>
    </ligand>
</feature>
<feature type="binding site" evidence="1">
    <location>
        <position position="118"/>
    </location>
    <ligand>
        <name>ATP</name>
        <dbReference type="ChEBI" id="CHEBI:30616"/>
    </ligand>
</feature>
<feature type="binding site" evidence="1">
    <location>
        <position position="120"/>
    </location>
    <ligand>
        <name>L-aspartate</name>
        <dbReference type="ChEBI" id="CHEBI:29991"/>
    </ligand>
</feature>
<feature type="binding site" evidence="1">
    <location>
        <position position="124"/>
    </location>
    <ligand>
        <name>L-aspartate</name>
        <dbReference type="ChEBI" id="CHEBI:29991"/>
    </ligand>
</feature>
<feature type="binding site" evidence="1">
    <location>
        <position position="124"/>
    </location>
    <ligand>
        <name>L-citrulline</name>
        <dbReference type="ChEBI" id="CHEBI:57743"/>
    </ligand>
</feature>
<feature type="binding site" evidence="1">
    <location>
        <position position="125"/>
    </location>
    <ligand>
        <name>L-aspartate</name>
        <dbReference type="ChEBI" id="CHEBI:29991"/>
    </ligand>
</feature>
<feature type="binding site" evidence="1">
    <location>
        <position position="128"/>
    </location>
    <ligand>
        <name>L-citrulline</name>
        <dbReference type="ChEBI" id="CHEBI:57743"/>
    </ligand>
</feature>
<feature type="binding site" evidence="1">
    <location>
        <position position="177"/>
    </location>
    <ligand>
        <name>L-citrulline</name>
        <dbReference type="ChEBI" id="CHEBI:57743"/>
    </ligand>
</feature>
<feature type="binding site" evidence="1">
    <location>
        <position position="186"/>
    </location>
    <ligand>
        <name>L-citrulline</name>
        <dbReference type="ChEBI" id="CHEBI:57743"/>
    </ligand>
</feature>
<feature type="binding site" evidence="1">
    <location>
        <position position="262"/>
    </location>
    <ligand>
        <name>L-citrulline</name>
        <dbReference type="ChEBI" id="CHEBI:57743"/>
    </ligand>
</feature>
<feature type="binding site" evidence="1">
    <location>
        <position position="274"/>
    </location>
    <ligand>
        <name>L-citrulline</name>
        <dbReference type="ChEBI" id="CHEBI:57743"/>
    </ligand>
</feature>
<accession>Q8KDE0</accession>
<name>ASSY_CHLTE</name>
<dbReference type="EC" id="6.3.4.5" evidence="1"/>
<dbReference type="EMBL" id="AE006470">
    <property type="protein sequence ID" value="AAM72347.1"/>
    <property type="molecule type" value="Genomic_DNA"/>
</dbReference>
<dbReference type="RefSeq" id="NP_662005.1">
    <property type="nucleotide sequence ID" value="NC_002932.3"/>
</dbReference>
<dbReference type="RefSeq" id="WP_010932792.1">
    <property type="nucleotide sequence ID" value="NC_002932.3"/>
</dbReference>
<dbReference type="SMR" id="Q8KDE0"/>
<dbReference type="STRING" id="194439.CT1114"/>
<dbReference type="EnsemblBacteria" id="AAM72347">
    <property type="protein sequence ID" value="AAM72347"/>
    <property type="gene ID" value="CT1114"/>
</dbReference>
<dbReference type="KEGG" id="cte:CT1114"/>
<dbReference type="PATRIC" id="fig|194439.7.peg.1012"/>
<dbReference type="eggNOG" id="COG0137">
    <property type="taxonomic scope" value="Bacteria"/>
</dbReference>
<dbReference type="HOGENOM" id="CLU_032784_4_2_10"/>
<dbReference type="OrthoDB" id="9801641at2"/>
<dbReference type="UniPathway" id="UPA00068">
    <property type="reaction ID" value="UER00113"/>
</dbReference>
<dbReference type="Proteomes" id="UP000001007">
    <property type="component" value="Chromosome"/>
</dbReference>
<dbReference type="GO" id="GO:0005737">
    <property type="term" value="C:cytoplasm"/>
    <property type="evidence" value="ECO:0007669"/>
    <property type="project" value="UniProtKB-SubCell"/>
</dbReference>
<dbReference type="GO" id="GO:0004055">
    <property type="term" value="F:argininosuccinate synthase activity"/>
    <property type="evidence" value="ECO:0007669"/>
    <property type="project" value="UniProtKB-UniRule"/>
</dbReference>
<dbReference type="GO" id="GO:0005524">
    <property type="term" value="F:ATP binding"/>
    <property type="evidence" value="ECO:0007669"/>
    <property type="project" value="UniProtKB-UniRule"/>
</dbReference>
<dbReference type="GO" id="GO:0000053">
    <property type="term" value="P:argininosuccinate metabolic process"/>
    <property type="evidence" value="ECO:0007669"/>
    <property type="project" value="TreeGrafter"/>
</dbReference>
<dbReference type="GO" id="GO:0006526">
    <property type="term" value="P:L-arginine biosynthetic process"/>
    <property type="evidence" value="ECO:0007669"/>
    <property type="project" value="UniProtKB-UniRule"/>
</dbReference>
<dbReference type="GO" id="GO:0000050">
    <property type="term" value="P:urea cycle"/>
    <property type="evidence" value="ECO:0007669"/>
    <property type="project" value="TreeGrafter"/>
</dbReference>
<dbReference type="CDD" id="cd01999">
    <property type="entry name" value="ASS"/>
    <property type="match status" value="1"/>
</dbReference>
<dbReference type="FunFam" id="3.40.50.620:FF:000019">
    <property type="entry name" value="Argininosuccinate synthase"/>
    <property type="match status" value="1"/>
</dbReference>
<dbReference type="FunFam" id="3.90.1260.10:FF:000007">
    <property type="entry name" value="Argininosuccinate synthase"/>
    <property type="match status" value="1"/>
</dbReference>
<dbReference type="Gene3D" id="3.90.1260.10">
    <property type="entry name" value="Argininosuccinate synthetase, chain A, domain 2"/>
    <property type="match status" value="1"/>
</dbReference>
<dbReference type="Gene3D" id="3.40.50.620">
    <property type="entry name" value="HUPs"/>
    <property type="match status" value="1"/>
</dbReference>
<dbReference type="Gene3D" id="1.20.5.470">
    <property type="entry name" value="Single helix bin"/>
    <property type="match status" value="1"/>
</dbReference>
<dbReference type="HAMAP" id="MF_00005">
    <property type="entry name" value="Arg_succ_synth_type1"/>
    <property type="match status" value="1"/>
</dbReference>
<dbReference type="InterPro" id="IPR048268">
    <property type="entry name" value="Arginosuc_syn_C"/>
</dbReference>
<dbReference type="InterPro" id="IPR048267">
    <property type="entry name" value="Arginosuc_syn_N"/>
</dbReference>
<dbReference type="InterPro" id="IPR001518">
    <property type="entry name" value="Arginosuc_synth"/>
</dbReference>
<dbReference type="InterPro" id="IPR018223">
    <property type="entry name" value="Arginosuc_synth_CS"/>
</dbReference>
<dbReference type="InterPro" id="IPR023434">
    <property type="entry name" value="Arginosuc_synth_type_1_subfam"/>
</dbReference>
<dbReference type="InterPro" id="IPR024074">
    <property type="entry name" value="AS_cat/multimer_dom_body"/>
</dbReference>
<dbReference type="InterPro" id="IPR014729">
    <property type="entry name" value="Rossmann-like_a/b/a_fold"/>
</dbReference>
<dbReference type="NCBIfam" id="TIGR00032">
    <property type="entry name" value="argG"/>
    <property type="match status" value="1"/>
</dbReference>
<dbReference type="NCBIfam" id="NF001770">
    <property type="entry name" value="PRK00509.1"/>
    <property type="match status" value="1"/>
</dbReference>
<dbReference type="PANTHER" id="PTHR11587">
    <property type="entry name" value="ARGININOSUCCINATE SYNTHASE"/>
    <property type="match status" value="1"/>
</dbReference>
<dbReference type="PANTHER" id="PTHR11587:SF2">
    <property type="entry name" value="ARGININOSUCCINATE SYNTHASE"/>
    <property type="match status" value="1"/>
</dbReference>
<dbReference type="Pfam" id="PF20979">
    <property type="entry name" value="Arginosuc_syn_C"/>
    <property type="match status" value="1"/>
</dbReference>
<dbReference type="Pfam" id="PF00764">
    <property type="entry name" value="Arginosuc_synth"/>
    <property type="match status" value="1"/>
</dbReference>
<dbReference type="SUPFAM" id="SSF52402">
    <property type="entry name" value="Adenine nucleotide alpha hydrolases-like"/>
    <property type="match status" value="1"/>
</dbReference>
<dbReference type="SUPFAM" id="SSF69864">
    <property type="entry name" value="Argininosuccinate synthetase, C-terminal domain"/>
    <property type="match status" value="1"/>
</dbReference>
<dbReference type="PROSITE" id="PS00564">
    <property type="entry name" value="ARGININOSUCCIN_SYN_1"/>
    <property type="match status" value="1"/>
</dbReference>
<dbReference type="PROSITE" id="PS00565">
    <property type="entry name" value="ARGININOSUCCIN_SYN_2"/>
    <property type="match status" value="1"/>
</dbReference>
<keyword id="KW-0028">Amino-acid biosynthesis</keyword>
<keyword id="KW-0055">Arginine biosynthesis</keyword>
<keyword id="KW-0067">ATP-binding</keyword>
<keyword id="KW-0963">Cytoplasm</keyword>
<keyword id="KW-0436">Ligase</keyword>
<keyword id="KW-0547">Nucleotide-binding</keyword>
<keyword id="KW-1185">Reference proteome</keyword>
<organism>
    <name type="scientific">Chlorobaculum tepidum (strain ATCC 49652 / DSM 12025 / NBRC 103806 / TLS)</name>
    <name type="common">Chlorobium tepidum</name>
    <dbReference type="NCBI Taxonomy" id="194439"/>
    <lineage>
        <taxon>Bacteria</taxon>
        <taxon>Pseudomonadati</taxon>
        <taxon>Chlorobiota</taxon>
        <taxon>Chlorobiia</taxon>
        <taxon>Chlorobiales</taxon>
        <taxon>Chlorobiaceae</taxon>
        <taxon>Chlorobaculum</taxon>
    </lineage>
</organism>
<sequence>MSKEKIAVAYSGGLDTSVMIKWLKDKYEGAEIVAVTGNLGQKMEVDNLEQKAIATGAKSFHFVDLRKTFVEEYIWKALKAGALYEDVYPLATALGRPLLAKALVDVALAEGCTMLTHGCTGKGNDQVRFEVAFAALAPHMKVVAPLREWEFTSREQEIAYAMEHNIPVSATKKNPYSIDENIWGISIECGVLEDPMVAPPADAYQITTAPELAPDEPTVVDIEFAQGVPVALDGQQMEGLDLIVRLNELGAMNGVGRLDMIENRVVGIKSREIYEAPAATILHFAHRELERLTLEKSVFQYKRNIGQDYANLIYNGTWFSPMRKALDAFVDETQKPVTGMVRIKLYKGSMTLLGRTSPNSLYNEALATYTEADTFDHKSAEGFIKIYGLGLKTFHEVNKSE</sequence>
<proteinExistence type="inferred from homology"/>
<comment type="catalytic activity">
    <reaction evidence="1">
        <text>L-citrulline + L-aspartate + ATP = 2-(N(omega)-L-arginino)succinate + AMP + diphosphate + H(+)</text>
        <dbReference type="Rhea" id="RHEA:10932"/>
        <dbReference type="ChEBI" id="CHEBI:15378"/>
        <dbReference type="ChEBI" id="CHEBI:29991"/>
        <dbReference type="ChEBI" id="CHEBI:30616"/>
        <dbReference type="ChEBI" id="CHEBI:33019"/>
        <dbReference type="ChEBI" id="CHEBI:57472"/>
        <dbReference type="ChEBI" id="CHEBI:57743"/>
        <dbReference type="ChEBI" id="CHEBI:456215"/>
        <dbReference type="EC" id="6.3.4.5"/>
    </reaction>
</comment>
<comment type="pathway">
    <text evidence="1">Amino-acid biosynthesis; L-arginine biosynthesis; L-arginine from L-ornithine and carbamoyl phosphate: step 2/3.</text>
</comment>
<comment type="subunit">
    <text evidence="1">Homotetramer.</text>
</comment>
<comment type="subcellular location">
    <subcellularLocation>
        <location evidence="1">Cytoplasm</location>
    </subcellularLocation>
</comment>
<comment type="similarity">
    <text evidence="1">Belongs to the argininosuccinate synthase family. Type 1 subfamily.</text>
</comment>
<reference key="1">
    <citation type="journal article" date="2002" name="Proc. Natl. Acad. Sci. U.S.A.">
        <title>The complete genome sequence of Chlorobium tepidum TLS, a photosynthetic, anaerobic, green-sulfur bacterium.</title>
        <authorList>
            <person name="Eisen J.A."/>
            <person name="Nelson K.E."/>
            <person name="Paulsen I.T."/>
            <person name="Heidelberg J.F."/>
            <person name="Wu M."/>
            <person name="Dodson R.J."/>
            <person name="DeBoy R.T."/>
            <person name="Gwinn M.L."/>
            <person name="Nelson W.C."/>
            <person name="Haft D.H."/>
            <person name="Hickey E.K."/>
            <person name="Peterson J.D."/>
            <person name="Durkin A.S."/>
            <person name="Kolonay J.F."/>
            <person name="Yang F."/>
            <person name="Holt I.E."/>
            <person name="Umayam L.A."/>
            <person name="Mason T.M."/>
            <person name="Brenner M."/>
            <person name="Shea T.P."/>
            <person name="Parksey D.S."/>
            <person name="Nierman W.C."/>
            <person name="Feldblyum T.V."/>
            <person name="Hansen C.L."/>
            <person name="Craven M.B."/>
            <person name="Radune D."/>
            <person name="Vamathevan J.J."/>
            <person name="Khouri H.M."/>
            <person name="White O."/>
            <person name="Gruber T.M."/>
            <person name="Ketchum K.A."/>
            <person name="Venter J.C."/>
            <person name="Tettelin H."/>
            <person name="Bryant D.A."/>
            <person name="Fraser C.M."/>
        </authorList>
    </citation>
    <scope>NUCLEOTIDE SEQUENCE [LARGE SCALE GENOMIC DNA]</scope>
    <source>
        <strain>ATCC 49652 / DSM 12025 / NBRC 103806 / TLS</strain>
    </source>
</reference>
<gene>
    <name evidence="1" type="primary">argG</name>
    <name type="ordered locus">CT1114</name>
</gene>